<keyword id="KW-0238">DNA-binding</keyword>
<keyword id="KW-0479">Metal-binding</keyword>
<keyword id="KW-0539">Nucleus</keyword>
<keyword id="KW-1185">Reference proteome</keyword>
<keyword id="KW-0677">Repeat</keyword>
<keyword id="KW-0804">Transcription</keyword>
<keyword id="KW-0805">Transcription regulation</keyword>
<keyword id="KW-0862">Zinc</keyword>
<keyword id="KW-0863">Zinc-finger</keyword>
<feature type="chain" id="PRO_0000446016" description="Zinc finger protein 54">
    <location>
        <begin position="1"/>
        <end position="585"/>
    </location>
</feature>
<feature type="domain" description="KRAB" evidence="2">
    <location>
        <begin position="13"/>
        <end position="95"/>
    </location>
</feature>
<feature type="zinc finger region" description="C2H2-type 1; degenerate" evidence="1">
    <location>
        <begin position="183"/>
        <end position="205"/>
    </location>
</feature>
<feature type="zinc finger region" description="C2H2-type 2" evidence="1">
    <location>
        <begin position="211"/>
        <end position="233"/>
    </location>
</feature>
<feature type="zinc finger region" description="C2H2-type 3" evidence="1">
    <location>
        <begin position="243"/>
        <end position="265"/>
    </location>
</feature>
<feature type="zinc finger region" description="C2H2-type 4" evidence="1">
    <location>
        <begin position="271"/>
        <end position="293"/>
    </location>
</feature>
<feature type="zinc finger region" description="C2H2-type 5" evidence="1">
    <location>
        <begin position="299"/>
        <end position="321"/>
    </location>
</feature>
<feature type="zinc finger region" description="C2H2-type 6" evidence="1">
    <location>
        <begin position="327"/>
        <end position="349"/>
    </location>
</feature>
<feature type="zinc finger region" description="C2H2-type 7" evidence="1">
    <location>
        <begin position="355"/>
        <end position="377"/>
    </location>
</feature>
<feature type="zinc finger region" description="C2H2-type 8; degenerate" evidence="1">
    <location>
        <begin position="383"/>
        <end position="405"/>
    </location>
</feature>
<feature type="zinc finger region" description="C2H2-type 9" evidence="1">
    <location>
        <begin position="411"/>
        <end position="433"/>
    </location>
</feature>
<feature type="zinc finger region" description="C2H2-type 10" evidence="1">
    <location>
        <begin position="439"/>
        <end position="461"/>
    </location>
</feature>
<feature type="zinc finger region" description="C2H2-type 11" evidence="1">
    <location>
        <begin position="467"/>
        <end position="489"/>
    </location>
</feature>
<feature type="zinc finger region" description="C2H2-type 12" evidence="1">
    <location>
        <begin position="495"/>
        <end position="517"/>
    </location>
</feature>
<feature type="zinc finger region" description="C2H2-type 13" evidence="1">
    <location>
        <begin position="523"/>
        <end position="545"/>
    </location>
</feature>
<feature type="zinc finger region" description="C2H2-type 14" evidence="1">
    <location>
        <begin position="551"/>
        <end position="573"/>
    </location>
</feature>
<feature type="region of interest" description="Required for nuclear localization" evidence="4">
    <location>
        <begin position="1"/>
        <end position="167"/>
    </location>
</feature>
<feature type="sequence conflict" description="In Ref. 1; AAC29445." evidence="6" ref="1">
    <original>F</original>
    <variation>Y</variation>
    <location>
        <position position="165"/>
    </location>
</feature>
<feature type="sequence conflict" description="In Ref. 1; AAC29445." evidence="6" ref="1">
    <original>E</original>
    <variation>G</variation>
    <location>
        <position position="380"/>
    </location>
</feature>
<feature type="sequence conflict" description="In Ref. 4; AAH80782." evidence="6" ref="4">
    <original>T</original>
    <variation>I</variation>
    <location>
        <position position="438"/>
    </location>
</feature>
<organism evidence="11">
    <name type="scientific">Mus musculus</name>
    <name type="common">Mouse</name>
    <dbReference type="NCBI Taxonomy" id="10090"/>
    <lineage>
        <taxon>Eukaryota</taxon>
        <taxon>Metazoa</taxon>
        <taxon>Chordata</taxon>
        <taxon>Craniata</taxon>
        <taxon>Vertebrata</taxon>
        <taxon>Euteleostomi</taxon>
        <taxon>Mammalia</taxon>
        <taxon>Eutheria</taxon>
        <taxon>Euarchontoglires</taxon>
        <taxon>Glires</taxon>
        <taxon>Rodentia</taxon>
        <taxon>Myomorpha</taxon>
        <taxon>Muroidea</taxon>
        <taxon>Muridae</taxon>
        <taxon>Murinae</taxon>
        <taxon>Mus</taxon>
        <taxon>Mus</taxon>
    </lineage>
</organism>
<gene>
    <name evidence="5 10" type="primary">Zfp54</name>
</gene>
<proteinExistence type="evidence at transcript level"/>
<name>ZFP54_MOUSE</name>
<sequence length="585" mass="68369">MADSSVNLSQGLLTFRDVTVDFSQEEWECLDSAQRALYIEVMLENYSNLVYVENYCICDTVCQHVKTEKESCNELGEMLHEPSNCALYNRSDTTEASNNYRCCKDQDASLDSSNPDRLKSTHTGKERCESKDCAKSSSLCSSIAQDQRTNSTNKEQRQEKYDDHFISTHSLMQQAIYIGENPHQCMKYGKCFSSASSLGVQQRTDTGNKPYKCNICDKSFTECSSLKEHRKTHQRLRAGTNPYKCNDCGKSFSYLSALQSHHKRHTGEKRYKCKECGKSYAYRTGLKRHQKIHTAEECYSCQYCGKVFHQLSHFKSHFTLHTGEKPYKCNECHRSFPHYVFFRRHKKNHSLQKSHKCKECGKSFFILSHLKTHYRIHTGEKPYKCTKCDKLFTQYSHLRRHQRIYTGKKLYRCEVCDKWFTLSSSLSRHQKIHTEAKTYKCKDCDIFFNHYSSLRRHQKVHTGERHYTCKQCGKSFTRGSTLRVHQRIHTGEKPYKCSECDKSFTQASQLRTHQRVHTGEKPYVCKECGKSLTTCAILRAHQKIHTGEKPYKCMECDRSYIQYSHLKRHQKVHTGEKHKIVNNVT</sequence>
<reference evidence="7" key="1">
    <citation type="journal article" date="1999" name="Mamm. Genome">
        <title>Molecular characterization of Zfp54, a zinc-finger-containing gene that is deleted in the embryonic lethal mutation tw18.</title>
        <authorList>
            <person name="Shannon M."/>
            <person name="Stubbs L."/>
        </authorList>
    </citation>
    <scope>NUCLEOTIDE SEQUENCE [MRNA]</scope>
    <scope>TISSUE SPECIFICITY</scope>
    <scope>DEVELOPMENTAL STAGE</scope>
</reference>
<reference evidence="9" key="2">
    <citation type="submission" date="2003-12" db="EMBL/GenBank/DDBJ databases">
        <title>Genomic sequence analysis in the mouse t-complex region.</title>
        <authorList>
            <person name="Brathwaite M."/>
            <person name="Waeltz P."/>
            <person name="Dudekula D."/>
            <person name="Qian Y."/>
            <person name="Nagaraja R."/>
        </authorList>
    </citation>
    <scope>NUCLEOTIDE SEQUENCE [GENOMIC DNA]</scope>
    <source>
        <strain evidence="9">129S6/SvEvTac</strain>
    </source>
</reference>
<reference evidence="11" key="3">
    <citation type="journal article" date="2009" name="PLoS Biol.">
        <title>Lineage-specific biology revealed by a finished genome assembly of the mouse.</title>
        <authorList>
            <person name="Church D.M."/>
            <person name="Goodstadt L."/>
            <person name="Hillier L.W."/>
            <person name="Zody M.C."/>
            <person name="Goldstein S."/>
            <person name="She X."/>
            <person name="Bult C.J."/>
            <person name="Agarwala R."/>
            <person name="Cherry J.L."/>
            <person name="DiCuccio M."/>
            <person name="Hlavina W."/>
            <person name="Kapustin Y."/>
            <person name="Meric P."/>
            <person name="Maglott D."/>
            <person name="Birtle Z."/>
            <person name="Marques A.C."/>
            <person name="Graves T."/>
            <person name="Zhou S."/>
            <person name="Teague B."/>
            <person name="Potamousis K."/>
            <person name="Churas C."/>
            <person name="Place M."/>
            <person name="Herschleb J."/>
            <person name="Runnheim R."/>
            <person name="Forrest D."/>
            <person name="Amos-Landgraf J."/>
            <person name="Schwartz D.C."/>
            <person name="Cheng Z."/>
            <person name="Lindblad-Toh K."/>
            <person name="Eichler E.E."/>
            <person name="Ponting C.P."/>
        </authorList>
    </citation>
    <scope>NUCLEOTIDE SEQUENCE [LARGE SCALE GENOMIC DNA]</scope>
    <source>
        <strain evidence="11">C57BL/6J</strain>
    </source>
</reference>
<reference evidence="8" key="4">
    <citation type="journal article" date="2004" name="Genome Res.">
        <title>The status, quality, and expansion of the NIH full-length cDNA project: the Mammalian Gene Collection (MGC).</title>
        <authorList>
            <consortium name="The MGC Project Team"/>
        </authorList>
    </citation>
    <scope>NUCLEOTIDE SEQUENCE [LARGE SCALE MRNA]</scope>
    <source>
        <strain evidence="8">C57BL/6J</strain>
        <tissue evidence="8">Kidney</tissue>
    </source>
</reference>
<reference evidence="6" key="5">
    <citation type="journal article" date="2010" name="DNA Cell Biol.">
        <title>Localization and differential expression of the Krueppel-associated box zinc finger proteins 1 and 54 in early mouse development.</title>
        <authorList>
            <person name="Albertsen M."/>
            <person name="Teperek M."/>
            <person name="Elholm G."/>
            <person name="Fuechtbauer E.M."/>
            <person name="Lykke-Hartmann K."/>
        </authorList>
    </citation>
    <scope>SUBCELLULAR LOCATION</scope>
    <scope>DEVELOPMENTAL STAGE</scope>
</reference>
<comment type="function">
    <text evidence="6">May be involved in transcriptional regulation.</text>
</comment>
<comment type="subcellular location">
    <subcellularLocation>
        <location evidence="4">Nucleus</location>
    </subcellularLocation>
    <text evidence="4">Shows widespread expression throughout the nucleus, but appears to be excluded from nucleoli.</text>
</comment>
<comment type="tissue specificity">
    <text evidence="3">Expressed at high levels in testis, may also be expressed at low levels in heart, brain, and skeletal muscle.</text>
</comment>
<comment type="developmental stage">
    <text evidence="3 4">Expression is initially maternally contributed, with increased expression at the two-cell stage followed by significant decrease at the 4-cell stage, remaining consistently low through to the morula stage (PubMed:20624068). Elevated expression in early embryonic stage (7 days post coitum (dpc)) with decreased but consistent expression thereafter in whole embryos (PubMed:10384051). Increased expression at 20 dpc in testis, with lower but consistent expression thereafter (PubMed:10384051).</text>
</comment>
<comment type="similarity">
    <text evidence="6">Belongs to the krueppel C2H2-type zinc-finger protein family.</text>
</comment>
<comment type="sequence caution" evidence="6">
    <conflict type="erroneous initiation">
        <sequence resource="EMBL-CDS" id="AAC29445"/>
    </conflict>
    <text>Extended N-terminus.</text>
</comment>
<comment type="sequence caution" evidence="6">
    <conflict type="erroneous gene model prediction">
        <sequence resource="EMBL-CDS" id="AAR91691"/>
    </conflict>
</comment>
<protein>
    <recommendedName>
        <fullName evidence="5">Zinc finger protein 54</fullName>
    </recommendedName>
    <alternativeName>
        <fullName evidence="5">Krueppel-associated box protein 10</fullName>
        <shortName evidence="5">KRAB10</shortName>
    </alternativeName>
</protein>
<dbReference type="EMBL" id="AF080070">
    <property type="protein sequence ID" value="AAC29445.1"/>
    <property type="status" value="ALT_INIT"/>
    <property type="molecule type" value="mRNA"/>
</dbReference>
<dbReference type="EMBL" id="AY510701">
    <property type="protein sequence ID" value="AAR91691.1"/>
    <property type="status" value="ALT_SEQ"/>
    <property type="molecule type" value="Genomic_DNA"/>
</dbReference>
<dbReference type="EMBL" id="CT009594">
    <property type="status" value="NOT_ANNOTATED_CDS"/>
    <property type="molecule type" value="Genomic_DNA"/>
</dbReference>
<dbReference type="EMBL" id="CT010433">
    <property type="status" value="NOT_ANNOTATED_CDS"/>
    <property type="molecule type" value="Genomic_DNA"/>
</dbReference>
<dbReference type="EMBL" id="BC080782">
    <property type="protein sequence ID" value="AAH80782.1"/>
    <property type="molecule type" value="mRNA"/>
</dbReference>
<dbReference type="CCDS" id="CCDS37462.1"/>
<dbReference type="PIR" id="C40984">
    <property type="entry name" value="C40984"/>
</dbReference>
<dbReference type="RefSeq" id="NP_001366285.1">
    <property type="nucleotide sequence ID" value="NM_001379356.1"/>
</dbReference>
<dbReference type="RefSeq" id="NP_001366286.1">
    <property type="nucleotide sequence ID" value="NM_001379357.1"/>
</dbReference>
<dbReference type="RefSeq" id="NP_001366287.1">
    <property type="nucleotide sequence ID" value="NM_001379358.1"/>
</dbReference>
<dbReference type="RefSeq" id="NP_035890.2">
    <property type="nucleotide sequence ID" value="NM_011760.2"/>
</dbReference>
<dbReference type="SMR" id="E9PW05"/>
<dbReference type="IntAct" id="E9PW05">
    <property type="interactions" value="1"/>
</dbReference>
<dbReference type="STRING" id="10090.ENSMUSP00000132983"/>
<dbReference type="iPTMnet" id="E9PW05"/>
<dbReference type="PhosphoSitePlus" id="E9PW05"/>
<dbReference type="PaxDb" id="10090-ENSMUSP00000132983"/>
<dbReference type="ProteomicsDB" id="341017"/>
<dbReference type="DNASU" id="22712"/>
<dbReference type="Ensembl" id="ENSMUST00000007884.15">
    <property type="protein sequence ID" value="ENSMUSP00000007884.9"/>
    <property type="gene ID" value="ENSMUSG00000023882.16"/>
</dbReference>
<dbReference type="Ensembl" id="ENSMUST00000165230.8">
    <property type="protein sequence ID" value="ENSMUSP00000132983.2"/>
    <property type="gene ID" value="ENSMUSG00000023882.16"/>
</dbReference>
<dbReference type="GeneID" id="22712"/>
<dbReference type="KEGG" id="mmu:22712"/>
<dbReference type="UCSC" id="uc008aqu.1">
    <property type="organism name" value="mouse"/>
</dbReference>
<dbReference type="AGR" id="MGI:99201"/>
<dbReference type="CTD" id="22712"/>
<dbReference type="MGI" id="MGI:99201">
    <property type="gene designation" value="Zfp54"/>
</dbReference>
<dbReference type="VEuPathDB" id="HostDB:ENSMUSG00000023882"/>
<dbReference type="eggNOG" id="KOG1721">
    <property type="taxonomic scope" value="Eukaryota"/>
</dbReference>
<dbReference type="GeneTree" id="ENSGT00940000153165"/>
<dbReference type="HOGENOM" id="CLU_002678_44_11_1"/>
<dbReference type="InParanoid" id="E9PW05"/>
<dbReference type="OMA" id="HINESHM"/>
<dbReference type="OrthoDB" id="6077919at2759"/>
<dbReference type="PhylomeDB" id="E9PW05"/>
<dbReference type="TreeFam" id="TF350864"/>
<dbReference type="Reactome" id="R-MMU-212436">
    <property type="pathway name" value="Generic Transcription Pathway"/>
</dbReference>
<dbReference type="Reactome" id="R-MMU-9843940">
    <property type="pathway name" value="Regulation of endogenous retroelements by KRAB-ZFP proteins"/>
</dbReference>
<dbReference type="BioGRID-ORCS" id="22712">
    <property type="hits" value="0 hits in 76 CRISPR screens"/>
</dbReference>
<dbReference type="ChiTaRS" id="Zfp54">
    <property type="organism name" value="mouse"/>
</dbReference>
<dbReference type="PRO" id="PR:E9PW05"/>
<dbReference type="Proteomes" id="UP000000589">
    <property type="component" value="Chromosome 17"/>
</dbReference>
<dbReference type="RNAct" id="E9PW05">
    <property type="molecule type" value="protein"/>
</dbReference>
<dbReference type="Bgee" id="ENSMUSG00000023882">
    <property type="expression patterns" value="Expressed in spermatocyte and 209 other cell types or tissues"/>
</dbReference>
<dbReference type="ExpressionAtlas" id="E9PW05">
    <property type="expression patterns" value="baseline and differential"/>
</dbReference>
<dbReference type="GO" id="GO:0005634">
    <property type="term" value="C:nucleus"/>
    <property type="evidence" value="ECO:0007669"/>
    <property type="project" value="UniProtKB-SubCell"/>
</dbReference>
<dbReference type="GO" id="GO:0003677">
    <property type="term" value="F:DNA binding"/>
    <property type="evidence" value="ECO:0007669"/>
    <property type="project" value="UniProtKB-KW"/>
</dbReference>
<dbReference type="GO" id="GO:0008270">
    <property type="term" value="F:zinc ion binding"/>
    <property type="evidence" value="ECO:0007669"/>
    <property type="project" value="UniProtKB-KW"/>
</dbReference>
<dbReference type="GO" id="GO:0006355">
    <property type="term" value="P:regulation of DNA-templated transcription"/>
    <property type="evidence" value="ECO:0007669"/>
    <property type="project" value="InterPro"/>
</dbReference>
<dbReference type="CDD" id="cd07765">
    <property type="entry name" value="KRAB_A-box"/>
    <property type="match status" value="1"/>
</dbReference>
<dbReference type="FunFam" id="3.30.160.60:FF:000446">
    <property type="entry name" value="Zinc finger protein"/>
    <property type="match status" value="1"/>
</dbReference>
<dbReference type="FunFam" id="3.30.160.60:FF:000358">
    <property type="entry name" value="zinc finger protein 24"/>
    <property type="match status" value="2"/>
</dbReference>
<dbReference type="FunFam" id="3.30.160.60:FF:002343">
    <property type="entry name" value="Zinc finger protein 33A"/>
    <property type="match status" value="4"/>
</dbReference>
<dbReference type="FunFam" id="3.30.160.60:FF:000690">
    <property type="entry name" value="Zinc finger protein 354C"/>
    <property type="match status" value="1"/>
</dbReference>
<dbReference type="FunFam" id="3.30.160.60:FF:000060">
    <property type="entry name" value="zinc finger protein 436"/>
    <property type="match status" value="1"/>
</dbReference>
<dbReference type="FunFam" id="3.30.160.60:FF:001270">
    <property type="entry name" value="zinc finger protein 583 isoform X1"/>
    <property type="match status" value="2"/>
</dbReference>
<dbReference type="FunFam" id="3.30.160.60:FF:001239">
    <property type="entry name" value="Zinc finger protein 615"/>
    <property type="match status" value="1"/>
</dbReference>
<dbReference type="Gene3D" id="6.10.140.140">
    <property type="match status" value="1"/>
</dbReference>
<dbReference type="Gene3D" id="3.30.160.60">
    <property type="entry name" value="Classic Zinc Finger"/>
    <property type="match status" value="14"/>
</dbReference>
<dbReference type="InterPro" id="IPR001909">
    <property type="entry name" value="KRAB"/>
</dbReference>
<dbReference type="InterPro" id="IPR036051">
    <property type="entry name" value="KRAB_dom_sf"/>
</dbReference>
<dbReference type="InterPro" id="IPR050331">
    <property type="entry name" value="Zinc_finger"/>
</dbReference>
<dbReference type="InterPro" id="IPR036236">
    <property type="entry name" value="Znf_C2H2_sf"/>
</dbReference>
<dbReference type="InterPro" id="IPR013087">
    <property type="entry name" value="Znf_C2H2_type"/>
</dbReference>
<dbReference type="PANTHER" id="PTHR16515">
    <property type="entry name" value="PR DOMAIN ZINC FINGER PROTEIN"/>
    <property type="match status" value="1"/>
</dbReference>
<dbReference type="PANTHER" id="PTHR16515:SF57">
    <property type="entry name" value="ZINC FINGER PROTEIN 154-LIKE"/>
    <property type="match status" value="1"/>
</dbReference>
<dbReference type="Pfam" id="PF01352">
    <property type="entry name" value="KRAB"/>
    <property type="match status" value="1"/>
</dbReference>
<dbReference type="Pfam" id="PF00096">
    <property type="entry name" value="zf-C2H2"/>
    <property type="match status" value="11"/>
</dbReference>
<dbReference type="Pfam" id="PF13912">
    <property type="entry name" value="zf-C2H2_6"/>
    <property type="match status" value="1"/>
</dbReference>
<dbReference type="SMART" id="SM00349">
    <property type="entry name" value="KRAB"/>
    <property type="match status" value="1"/>
</dbReference>
<dbReference type="SMART" id="SM00355">
    <property type="entry name" value="ZnF_C2H2"/>
    <property type="match status" value="13"/>
</dbReference>
<dbReference type="SUPFAM" id="SSF57667">
    <property type="entry name" value="beta-beta-alpha zinc fingers"/>
    <property type="match status" value="8"/>
</dbReference>
<dbReference type="SUPFAM" id="SSF109640">
    <property type="entry name" value="KRAB domain (Kruppel-associated box)"/>
    <property type="match status" value="1"/>
</dbReference>
<dbReference type="PROSITE" id="PS50805">
    <property type="entry name" value="KRAB"/>
    <property type="match status" value="1"/>
</dbReference>
<dbReference type="PROSITE" id="PS00028">
    <property type="entry name" value="ZINC_FINGER_C2H2_1"/>
    <property type="match status" value="12"/>
</dbReference>
<dbReference type="PROSITE" id="PS50157">
    <property type="entry name" value="ZINC_FINGER_C2H2_2"/>
    <property type="match status" value="14"/>
</dbReference>
<evidence type="ECO:0000255" key="1">
    <source>
        <dbReference type="PROSITE-ProRule" id="PRU00042"/>
    </source>
</evidence>
<evidence type="ECO:0000255" key="2">
    <source>
        <dbReference type="PROSITE-ProRule" id="PRU00119"/>
    </source>
</evidence>
<evidence type="ECO:0000269" key="3">
    <source>
    </source>
</evidence>
<evidence type="ECO:0000269" key="4">
    <source>
    </source>
</evidence>
<evidence type="ECO:0000303" key="5">
    <source>
    </source>
</evidence>
<evidence type="ECO:0000305" key="6"/>
<evidence type="ECO:0000312" key="7">
    <source>
        <dbReference type="EMBL" id="AAC29445.1"/>
    </source>
</evidence>
<evidence type="ECO:0000312" key="8">
    <source>
        <dbReference type="EMBL" id="AAH80782.1"/>
    </source>
</evidence>
<evidence type="ECO:0000312" key="9">
    <source>
        <dbReference type="EMBL" id="AAR91691.1"/>
    </source>
</evidence>
<evidence type="ECO:0000312" key="10">
    <source>
        <dbReference type="MGI" id="MGI:99201"/>
    </source>
</evidence>
<evidence type="ECO:0000312" key="11">
    <source>
        <dbReference type="Proteomes" id="UP000000589"/>
    </source>
</evidence>
<accession>E9PW05</accession>
<accession>O88631</accession>
<accession>Q66JT2</accession>
<accession>Q6R5P4</accession>